<comment type="function">
    <text evidence="1">Cell wall formation. Adds enolpyruvyl to UDP-N-acetylglucosamine.</text>
</comment>
<comment type="catalytic activity">
    <reaction evidence="1">
        <text>phosphoenolpyruvate + UDP-N-acetyl-alpha-D-glucosamine = UDP-N-acetyl-3-O-(1-carboxyvinyl)-alpha-D-glucosamine + phosphate</text>
        <dbReference type="Rhea" id="RHEA:18681"/>
        <dbReference type="ChEBI" id="CHEBI:43474"/>
        <dbReference type="ChEBI" id="CHEBI:57705"/>
        <dbReference type="ChEBI" id="CHEBI:58702"/>
        <dbReference type="ChEBI" id="CHEBI:68483"/>
        <dbReference type="EC" id="2.5.1.7"/>
    </reaction>
</comment>
<comment type="pathway">
    <text evidence="1">Cell wall biogenesis; peptidoglycan biosynthesis.</text>
</comment>
<comment type="subcellular location">
    <subcellularLocation>
        <location evidence="1">Cytoplasm</location>
    </subcellularLocation>
</comment>
<comment type="similarity">
    <text evidence="1">Belongs to the EPSP synthase family. MurA subfamily.</text>
</comment>
<accession>B8DMV2</accession>
<keyword id="KW-0131">Cell cycle</keyword>
<keyword id="KW-0132">Cell division</keyword>
<keyword id="KW-0133">Cell shape</keyword>
<keyword id="KW-0961">Cell wall biogenesis/degradation</keyword>
<keyword id="KW-0963">Cytoplasm</keyword>
<keyword id="KW-0573">Peptidoglycan synthesis</keyword>
<keyword id="KW-0670">Pyruvate</keyword>
<keyword id="KW-0808">Transferase</keyword>
<feature type="chain" id="PRO_1000117503" description="UDP-N-acetylglucosamine 1-carboxyvinyltransferase">
    <location>
        <begin position="1"/>
        <end position="417"/>
    </location>
</feature>
<feature type="active site" description="Proton donor" evidence="1">
    <location>
        <position position="115"/>
    </location>
</feature>
<feature type="binding site" evidence="1">
    <location>
        <begin position="22"/>
        <end position="23"/>
    </location>
    <ligand>
        <name>phosphoenolpyruvate</name>
        <dbReference type="ChEBI" id="CHEBI:58702"/>
    </ligand>
</feature>
<feature type="binding site" evidence="1">
    <location>
        <position position="91"/>
    </location>
    <ligand>
        <name>UDP-N-acetyl-alpha-D-glucosamine</name>
        <dbReference type="ChEBI" id="CHEBI:57705"/>
    </ligand>
</feature>
<feature type="binding site" evidence="1">
    <location>
        <begin position="120"/>
        <end position="124"/>
    </location>
    <ligand>
        <name>UDP-N-acetyl-alpha-D-glucosamine</name>
        <dbReference type="ChEBI" id="CHEBI:57705"/>
    </ligand>
</feature>
<feature type="binding site" evidence="1">
    <location>
        <position position="304"/>
    </location>
    <ligand>
        <name>UDP-N-acetyl-alpha-D-glucosamine</name>
        <dbReference type="ChEBI" id="CHEBI:57705"/>
    </ligand>
</feature>
<feature type="binding site" evidence="1">
    <location>
        <position position="326"/>
    </location>
    <ligand>
        <name>UDP-N-acetyl-alpha-D-glucosamine</name>
        <dbReference type="ChEBI" id="CHEBI:57705"/>
    </ligand>
</feature>
<feature type="modified residue" description="2-(S-cysteinyl)pyruvic acid O-phosphothioketal" evidence="1">
    <location>
        <position position="115"/>
    </location>
</feature>
<protein>
    <recommendedName>
        <fullName evidence="1">UDP-N-acetylglucosamine 1-carboxyvinyltransferase</fullName>
        <ecNumber evidence="1">2.5.1.7</ecNumber>
    </recommendedName>
    <alternativeName>
        <fullName evidence="1">Enoylpyruvate transferase</fullName>
    </alternativeName>
    <alternativeName>
        <fullName evidence="1">UDP-N-acetylglucosamine enolpyruvyl transferase</fullName>
        <shortName evidence="1">EPT</shortName>
    </alternativeName>
</protein>
<sequence>MDKLVIQGGVPLRGAIAVSGSKNAALPILMASILAEEPITYTNVPRLRDIFTTNKLLAILGCPAEFDGHTVTVTPCDLKPEAPYDLVKTMRASVLCLGPLLARLGEARVALPGGCAIGARPVDLHLTALEKMGATFDLDSGYIQGRCKKLRGAHIHFDFPTVGGTENLLMAATLAEGETILENVAREPEVVDLANFLIACGAKIEGHGSSVIKVQGVPRLGGCEYRIMPDRIEAGTFMVAAGITGGDLLLTDCPFEELEAVIAKLRDMGLIIEREGTRDVRVTHNGHLRARDVTTRPFPGFPTDMQAQIMALMTIASGAGVVEETIFENRFMHVPELVRMGADVKLSGHSAMVRGVQKLIGAPVMASDLRASASLVLAGLAAQGETHVQRIYHLDRGYERIEEKLNAVGARITRMPE</sequence>
<organism>
    <name type="scientific">Nitratidesulfovibrio vulgaris (strain DSM 19637 / Miyazaki F)</name>
    <name type="common">Desulfovibrio vulgaris</name>
    <dbReference type="NCBI Taxonomy" id="883"/>
    <lineage>
        <taxon>Bacteria</taxon>
        <taxon>Pseudomonadati</taxon>
        <taxon>Thermodesulfobacteriota</taxon>
        <taxon>Desulfovibrionia</taxon>
        <taxon>Desulfovibrionales</taxon>
        <taxon>Desulfovibrionaceae</taxon>
        <taxon>Nitratidesulfovibrio</taxon>
    </lineage>
</organism>
<reference key="1">
    <citation type="submission" date="2008-10" db="EMBL/GenBank/DDBJ databases">
        <title>Complete sequence of Desulfovibrio vulgaris str. 'Miyazaki F'.</title>
        <authorList>
            <person name="Lucas S."/>
            <person name="Copeland A."/>
            <person name="Lapidus A."/>
            <person name="Glavina del Rio T."/>
            <person name="Dalin E."/>
            <person name="Tice H."/>
            <person name="Bruce D."/>
            <person name="Goodwin L."/>
            <person name="Pitluck S."/>
            <person name="Sims D."/>
            <person name="Brettin T."/>
            <person name="Detter J.C."/>
            <person name="Han C."/>
            <person name="Larimer F."/>
            <person name="Land M."/>
            <person name="Hauser L."/>
            <person name="Kyrpides N."/>
            <person name="Mikhailova N."/>
            <person name="Hazen T.C."/>
            <person name="Richardson P."/>
        </authorList>
    </citation>
    <scope>NUCLEOTIDE SEQUENCE [LARGE SCALE GENOMIC DNA]</scope>
    <source>
        <strain>DSM 19637 / Miyazaki F</strain>
    </source>
</reference>
<dbReference type="EC" id="2.5.1.7" evidence="1"/>
<dbReference type="EMBL" id="CP001197">
    <property type="protein sequence ID" value="ACL09392.1"/>
    <property type="molecule type" value="Genomic_DNA"/>
</dbReference>
<dbReference type="SMR" id="B8DMV2"/>
<dbReference type="STRING" id="883.DvMF_2451"/>
<dbReference type="KEGG" id="dvm:DvMF_2451"/>
<dbReference type="eggNOG" id="COG0766">
    <property type="taxonomic scope" value="Bacteria"/>
</dbReference>
<dbReference type="HOGENOM" id="CLU_027387_0_0_7"/>
<dbReference type="OrthoDB" id="9803760at2"/>
<dbReference type="UniPathway" id="UPA00219"/>
<dbReference type="GO" id="GO:0005737">
    <property type="term" value="C:cytoplasm"/>
    <property type="evidence" value="ECO:0007669"/>
    <property type="project" value="UniProtKB-SubCell"/>
</dbReference>
<dbReference type="GO" id="GO:0008760">
    <property type="term" value="F:UDP-N-acetylglucosamine 1-carboxyvinyltransferase activity"/>
    <property type="evidence" value="ECO:0007669"/>
    <property type="project" value="UniProtKB-UniRule"/>
</dbReference>
<dbReference type="GO" id="GO:0051301">
    <property type="term" value="P:cell division"/>
    <property type="evidence" value="ECO:0007669"/>
    <property type="project" value="UniProtKB-KW"/>
</dbReference>
<dbReference type="GO" id="GO:0071555">
    <property type="term" value="P:cell wall organization"/>
    <property type="evidence" value="ECO:0007669"/>
    <property type="project" value="UniProtKB-KW"/>
</dbReference>
<dbReference type="GO" id="GO:0009252">
    <property type="term" value="P:peptidoglycan biosynthetic process"/>
    <property type="evidence" value="ECO:0007669"/>
    <property type="project" value="UniProtKB-UniRule"/>
</dbReference>
<dbReference type="GO" id="GO:0008360">
    <property type="term" value="P:regulation of cell shape"/>
    <property type="evidence" value="ECO:0007669"/>
    <property type="project" value="UniProtKB-KW"/>
</dbReference>
<dbReference type="GO" id="GO:0019277">
    <property type="term" value="P:UDP-N-acetylgalactosamine biosynthetic process"/>
    <property type="evidence" value="ECO:0007669"/>
    <property type="project" value="InterPro"/>
</dbReference>
<dbReference type="CDD" id="cd01555">
    <property type="entry name" value="UdpNAET"/>
    <property type="match status" value="1"/>
</dbReference>
<dbReference type="FunFam" id="3.65.10.10:FF:000001">
    <property type="entry name" value="UDP-N-acetylglucosamine 1-carboxyvinyltransferase"/>
    <property type="match status" value="1"/>
</dbReference>
<dbReference type="Gene3D" id="3.65.10.10">
    <property type="entry name" value="Enolpyruvate transferase domain"/>
    <property type="match status" value="2"/>
</dbReference>
<dbReference type="HAMAP" id="MF_00111">
    <property type="entry name" value="MurA"/>
    <property type="match status" value="1"/>
</dbReference>
<dbReference type="InterPro" id="IPR001986">
    <property type="entry name" value="Enolpyruvate_Tfrase_dom"/>
</dbReference>
<dbReference type="InterPro" id="IPR036968">
    <property type="entry name" value="Enolpyruvate_Tfrase_sf"/>
</dbReference>
<dbReference type="InterPro" id="IPR050068">
    <property type="entry name" value="MurA_subfamily"/>
</dbReference>
<dbReference type="InterPro" id="IPR013792">
    <property type="entry name" value="RNA3'P_cycl/enolpyr_Trfase_a/b"/>
</dbReference>
<dbReference type="InterPro" id="IPR005750">
    <property type="entry name" value="UDP_GlcNAc_COvinyl_MurA"/>
</dbReference>
<dbReference type="NCBIfam" id="TIGR01072">
    <property type="entry name" value="murA"/>
    <property type="match status" value="1"/>
</dbReference>
<dbReference type="NCBIfam" id="NF006873">
    <property type="entry name" value="PRK09369.1"/>
    <property type="match status" value="1"/>
</dbReference>
<dbReference type="PANTHER" id="PTHR43783">
    <property type="entry name" value="UDP-N-ACETYLGLUCOSAMINE 1-CARBOXYVINYLTRANSFERASE"/>
    <property type="match status" value="1"/>
</dbReference>
<dbReference type="PANTHER" id="PTHR43783:SF1">
    <property type="entry name" value="UDP-N-ACETYLGLUCOSAMINE 1-CARBOXYVINYLTRANSFERASE"/>
    <property type="match status" value="1"/>
</dbReference>
<dbReference type="Pfam" id="PF00275">
    <property type="entry name" value="EPSP_synthase"/>
    <property type="match status" value="1"/>
</dbReference>
<dbReference type="SUPFAM" id="SSF55205">
    <property type="entry name" value="EPT/RTPC-like"/>
    <property type="match status" value="1"/>
</dbReference>
<gene>
    <name evidence="1" type="primary">murA</name>
    <name type="ordered locus">DvMF_2451</name>
</gene>
<evidence type="ECO:0000255" key="1">
    <source>
        <dbReference type="HAMAP-Rule" id="MF_00111"/>
    </source>
</evidence>
<name>MURA_NITV9</name>
<proteinExistence type="inferred from homology"/>